<feature type="signal peptide" evidence="10 15 17">
    <location>
        <begin position="1"/>
        <end position="29"/>
    </location>
</feature>
<feature type="chain" id="PRO_0000015582" description="Interleukin-6">
    <location>
        <begin position="30"/>
        <end position="212"/>
    </location>
</feature>
<feature type="modified residue" description="Phosphoserine; by FAM20C" evidence="14">
    <location>
        <position position="81"/>
    </location>
</feature>
<feature type="glycosylation site" description="N-linked (GlcNAc...) asparagine" evidence="10">
    <location>
        <position position="73"/>
    </location>
</feature>
<feature type="disulfide bond" evidence="13">
    <location>
        <begin position="72"/>
        <end position="78"/>
    </location>
</feature>
<feature type="disulfide bond" evidence="13">
    <location>
        <begin position="101"/>
        <end position="111"/>
    </location>
</feature>
<feature type="sequence variant" id="VAR_013075" description="In dbSNP:rs2069830." evidence="20">
    <original>P</original>
    <variation>S</variation>
    <location>
        <position position="32"/>
    </location>
</feature>
<feature type="sequence variant" id="VAR_029266" description="In dbSNP:rs13306435.">
    <original>D</original>
    <variation>E</variation>
    <location>
        <position position="162"/>
    </location>
</feature>
<feature type="sequence variant" id="VAR_013076" description="In dbSNP:rs2069860." evidence="20">
    <original>D</original>
    <variation>V</variation>
    <location>
        <position position="162"/>
    </location>
</feature>
<feature type="mutagenesis site" description="Almost no loss of activity." evidence="11">
    <original>A</original>
    <variation>V</variation>
    <location>
        <position position="173"/>
    </location>
</feature>
<feature type="mutagenesis site" description="No loss of activity." evidence="11">
    <original>W</original>
    <variation>R</variation>
    <location>
        <position position="185"/>
    </location>
</feature>
<feature type="mutagenesis site" description="87% loss of activity." evidence="11">
    <original>S</original>
    <variation>P</variation>
    <location>
        <position position="204"/>
    </location>
</feature>
<feature type="mutagenesis site" description="Loss of activity." evidence="11">
    <original>R</original>
    <variation>K</variation>
    <variation>E</variation>
    <variation>Q</variation>
    <variation>T</variation>
    <variation>A</variation>
    <variation>P</variation>
    <location>
        <position position="210"/>
    </location>
</feature>
<feature type="mutagenesis site" description="Loss of activity." evidence="11">
    <original>M</original>
    <variation>T</variation>
    <variation>N</variation>
    <variation>S</variation>
    <variation>R</variation>
    <location>
        <position position="212"/>
    </location>
</feature>
<feature type="helix" evidence="25">
    <location>
        <begin position="49"/>
        <end position="75"/>
    </location>
</feature>
<feature type="strand" evidence="26">
    <location>
        <begin position="76"/>
        <end position="79"/>
    </location>
</feature>
<feature type="turn" evidence="27">
    <location>
        <begin position="81"/>
        <end position="83"/>
    </location>
</feature>
<feature type="helix" evidence="27">
    <location>
        <begin position="84"/>
        <end position="87"/>
    </location>
</feature>
<feature type="helix" evidence="25">
    <location>
        <begin position="97"/>
        <end position="99"/>
    </location>
</feature>
<feature type="strand" evidence="28">
    <location>
        <begin position="102"/>
        <end position="105"/>
    </location>
</feature>
<feature type="helix" evidence="25">
    <location>
        <begin position="108"/>
        <end position="132"/>
    </location>
</feature>
<feature type="strand" evidence="28">
    <location>
        <begin position="134"/>
        <end position="136"/>
    </location>
</feature>
<feature type="helix" evidence="25">
    <location>
        <begin position="137"/>
        <end position="157"/>
    </location>
</feature>
<feature type="strand" evidence="25">
    <location>
        <begin position="159"/>
        <end position="161"/>
    </location>
</feature>
<feature type="helix" evidence="25">
    <location>
        <begin position="169"/>
        <end position="180"/>
    </location>
</feature>
<feature type="helix" evidence="25">
    <location>
        <begin position="184"/>
        <end position="209"/>
    </location>
</feature>
<protein>
    <recommendedName>
        <fullName evidence="21">Interleukin-6</fullName>
        <shortName>IL-6</shortName>
    </recommendedName>
    <alternativeName>
        <fullName>B-cell stimulatory factor 2</fullName>
        <shortName>BSF-2</shortName>
    </alternativeName>
    <alternativeName>
        <fullName>CTL differentiation factor</fullName>
        <shortName>CDF</shortName>
    </alternativeName>
    <alternativeName>
        <fullName>Hybridoma growth factor</fullName>
    </alternativeName>
    <alternativeName>
        <fullName>Interferon beta-2</fullName>
        <shortName>IFN-beta-2</shortName>
    </alternativeName>
</protein>
<reference key="1">
    <citation type="journal article" date="1986" name="Nature">
        <title>Complementary DNA for a novel human interleukin (BSF-2) that induces B lymphocytes to produce immunoglobulin.</title>
        <authorList>
            <person name="Hirano T."/>
            <person name="Yasukawa K."/>
            <person name="Harada H."/>
            <person name="Taga T."/>
            <person name="Watanabe Y."/>
            <person name="Matsuda T."/>
            <person name="Kashiwamura S."/>
            <person name="Nakajima K."/>
            <person name="Koyama K."/>
            <person name="Iwamatsu A."/>
            <person name="Tsunasawa S."/>
            <person name="Sakiyama F."/>
            <person name="Matsui H."/>
            <person name="Takahara Y."/>
            <person name="Taniguchi T."/>
            <person name="Kishimoto T."/>
        </authorList>
    </citation>
    <scope>NUCLEOTIDE SEQUENCE [MRNA]</scope>
    <scope>PARTIAL PROTEIN SEQUENCE</scope>
</reference>
<reference key="2">
    <citation type="journal article" date="1987" name="EMBO J.">
        <title>Structure and expression of human B cell stimulatory factor-2 (BSF-2/IL-6) gene.</title>
        <authorList>
            <person name="Yasukawa K."/>
            <person name="Hirano T."/>
            <person name="Watanabe Y."/>
            <person name="Muratani K."/>
            <person name="Matsuda T."/>
            <person name="Nakai S."/>
            <person name="Kishimoto T."/>
        </authorList>
    </citation>
    <scope>NUCLEOTIDE SEQUENCE [GENOMIC DNA]</scope>
</reference>
<reference key="3">
    <citation type="journal article" date="1986" name="Proc. Natl. Acad. Sci. U.S.A.">
        <title>Anti-beta-interferon antibodies inhibit the increased expression of HLA-B7 mRNA in tumor necrosis factor-treated human fibroblasts: structural studies of the beta 2 interferon involved.</title>
        <authorList>
            <person name="May L.T."/>
            <person name="Helfgott D.C."/>
            <person name="Sehgal P.B."/>
        </authorList>
    </citation>
    <scope>NUCLEOTIDE SEQUENCE [MRNA]</scope>
</reference>
<reference key="4">
    <citation type="journal article" date="1986" name="EMBO J.">
        <title>Structure and expression of cDNA and genes for human interferon-beta-2, a distinct species inducible by growth-stimulatory cytokines.</title>
        <authorList>
            <person name="Zilberstein A."/>
            <person name="Ruggieri R."/>
            <person name="Korn J.H."/>
            <person name="Revel M."/>
        </authorList>
    </citation>
    <scope>NUCLEOTIDE SEQUENCE [MRNA]</scope>
</reference>
<reference key="5">
    <citation type="journal article" date="1987" name="J. Immunol.">
        <title>Molecular cloning and expression of hybridoma growth factor in Escherichia coli.</title>
        <authorList>
            <person name="Brakenhoff J.P.J."/>
            <person name="de Groot E.R."/>
            <person name="Evers R.F."/>
            <person name="Pannekoek H."/>
            <person name="Aarden L.A."/>
        </authorList>
    </citation>
    <scope>NUCLEOTIDE SEQUENCE [MRNA]</scope>
</reference>
<reference key="6">
    <citation type="journal article" date="1989" name="Biochem. Biophys. Res. Commun.">
        <title>Deletion of 3' untranslated region of human BSF-2 mRNA causes stabilization of the mRNA and high-level expression in mouse NIH3T3 cells.</title>
        <authorList>
            <person name="Tonouchi N."/>
            <person name="Miwa K."/>
            <person name="Karasuyama H."/>
            <person name="Matsui H."/>
        </authorList>
    </citation>
    <scope>NUCLEOTIDE SEQUENCE [MRNA]</scope>
</reference>
<reference key="7">
    <citation type="journal article" date="1986" name="Eur. J. Biochem.">
        <title>Structural analysis of the sequence coding for an inducible 26-kDa protein in human fibroblasts.</title>
        <authorList>
            <person name="Haegeman G."/>
            <person name="Content J."/>
            <person name="Volckaert G."/>
            <person name="Derynck R."/>
            <person name="Tavernier J."/>
            <person name="Fiers W."/>
        </authorList>
    </citation>
    <scope>NUCLEOTIDE SEQUENCE [GENOMIC DNA / MRNA]</scope>
    <source>
        <tissue>Fibroblast</tissue>
    </source>
</reference>
<reference key="8">
    <citation type="journal article" date="1988" name="Behring Inst. Mitt.">
        <title>Interleukin 6: identification as a hematopoietic colony-stimulating factor.</title>
        <authorList>
            <person name="Wong G."/>
            <person name="Witek-Giannotti J."/>
            <person name="Hewick R."/>
            <person name="Clark S."/>
            <person name="Ogawa M."/>
        </authorList>
    </citation>
    <scope>NUCLEOTIDE SEQUENCE [MRNA]</scope>
</reference>
<reference key="9">
    <citation type="journal article" date="1992" name="Zhonghua Zhong Liu Za Zhi">
        <title>Stable and efficient expression of human interleukin-6 cDNA in mammalian cells after gene transfer.</title>
        <authorList>
            <person name="Chen Q.Y."/>
        </authorList>
    </citation>
    <scope>NUCLEOTIDE SEQUENCE [MRNA]</scope>
</reference>
<reference key="10">
    <citation type="submission" date="2001-06" db="EMBL/GenBank/DDBJ databases">
        <authorList>
            <consortium name="SeattleSNPs variation discovery resource"/>
        </authorList>
    </citation>
    <scope>NUCLEOTIDE SEQUENCE [GENOMIC DNA]</scope>
    <scope>VARIANTS SER-32 AND VAL-162</scope>
</reference>
<reference key="11">
    <citation type="journal article" date="2004" name="Genome Res.">
        <title>The status, quality, and expansion of the NIH full-length cDNA project: the Mammalian Gene Collection (MGC).</title>
        <authorList>
            <consortium name="The MGC Project Team"/>
        </authorList>
    </citation>
    <scope>NUCLEOTIDE SEQUENCE [LARGE SCALE MRNA]</scope>
    <source>
        <tissue>Lung</tissue>
    </source>
</reference>
<reference key="12">
    <citation type="journal article" date="1988" name="J. Immunol.">
        <title>Separation and comparison of two monokines with lymphocyte-activating factor activity: IL-1 beta and hybridoma growth factor (HGF). Identification of leukocyte-derived HGF as IL-6.</title>
        <authorList>
            <person name="van Damme J."/>
            <person name="van Beeumen J."/>
            <person name="Decock B."/>
            <person name="van Snick J."/>
            <person name="de Ley M."/>
            <person name="Billiau A."/>
        </authorList>
    </citation>
    <scope>PROTEIN SEQUENCE OF 30-63</scope>
</reference>
<reference key="13">
    <citation type="journal article" date="1989" name="J. Mol. Cell. Immunol.">
        <title>Interleukin 6 is the principal cytolytic T lymphocyte differentiation factor for thymocytes in human leukocyte conditioned medium.</title>
        <authorList>
            <person name="Ming J.E."/>
            <person name="Cernetti C."/>
            <person name="Steinman R.M."/>
            <person name="Granelli-Piperno A."/>
        </authorList>
    </citation>
    <scope>PROTEIN SEQUENCE OF 30-50</scope>
</reference>
<reference key="14">
    <citation type="journal article" date="1991" name="Cytokine">
        <title>Marked cell-type-specific differences in glycosylation of human interleukin-6.</title>
        <authorList>
            <person name="May L.T."/>
            <person name="Shaw J.E."/>
            <person name="Khanna A.K."/>
            <person name="Zabriskie J.B."/>
            <person name="Sehgal P.B."/>
        </authorList>
    </citation>
    <scope>PROTEIN SEQUENCE OF 30-40</scope>
    <scope>GLYCOSYLATION</scope>
</reference>
<reference key="15">
    <citation type="journal article" date="1995" name="Eur. J. Biochem.">
        <title>Structure, stability and biological properties of a N-terminally truncated form of recombinant human interleukin-6 containing a single disulfide bond.</title>
        <authorList>
            <person name="Breton J."/>
            <person name="la Fiura A."/>
            <person name="Bertolero F."/>
            <person name="Orsini G."/>
            <person name="Valsasina B."/>
            <person name="Ziliotto R."/>
            <person name="de Filippis V."/>
            <person name="Polverino de Laureto P."/>
            <person name="Fontana A."/>
        </authorList>
    </citation>
    <scope>PROTEIN SEQUENCE OF 50-212</scope>
</reference>
<reference key="16">
    <citation type="journal article" date="1989" name="Arch. Biochem. Biophys.">
        <title>Disulfide structures of human interleukin-6 are similar to those of human granulocyte colony stimulating factor.</title>
        <authorList>
            <person name="Clogston C.L."/>
            <person name="Boone T.C."/>
            <person name="Crandall B.C."/>
            <person name="Mendiaz E.A."/>
            <person name="Lu H.S."/>
        </authorList>
    </citation>
    <scope>DISULFIDE BONDS</scope>
</reference>
<reference key="17">
    <citation type="journal article" date="1991" name="FEBS Lett.">
        <title>Evidence for the importance of a positive charge and an alpha-helical structure of the C-terminus for biological activity of human IL-6.</title>
        <authorList>
            <person name="Luetticken C."/>
            <person name="Kruettgen A."/>
            <person name="Moeller C."/>
            <person name="Heinrich P.C."/>
            <person name="Rose-John S."/>
        </authorList>
    </citation>
    <scope>MUTAGENESIS</scope>
</reference>
<reference key="18">
    <citation type="journal article" date="2000" name="J. Physiol. (Lond.)">
        <title>Production of interleukin-6 in contracting human skeletal muscles can account for the exercise-induced increase in plasma interleukin-6.</title>
        <authorList>
            <person name="Steensberg A."/>
            <person name="van Hall G."/>
            <person name="Osada T."/>
            <person name="Sacchetti M."/>
            <person name="Saltin B."/>
            <person name="Klarlund Pedersen B."/>
        </authorList>
    </citation>
    <scope>TISSUE SPECIFICITY</scope>
    <scope>INDUCTION BY EXERCISE</scope>
    <scope>SUBCELLULAR LOCATION</scope>
</reference>
<reference key="19">
    <citation type="journal article" date="2003" name="Arthritis Rheum.">
        <title>Anti-interleukin-6 receptor antibody therapy reduces vascular endothelial growth factor production in rheumatoid arthritis.</title>
        <authorList>
            <person name="Nakahara H."/>
            <person name="Song J."/>
            <person name="Sugimoto M."/>
            <person name="Hagihara K."/>
            <person name="Kishimoto T."/>
            <person name="Yoshizaki K."/>
            <person name="Nishimoto N."/>
        </authorList>
    </citation>
    <scope>FUNCTION</scope>
</reference>
<reference key="20">
    <citation type="journal article" date="2004" name="J. Clin. Invest.">
        <title>IL-6 mediates hypoferremia of inflammation by inducing the synthesis of the iron regulatory hormone hepcidin.</title>
        <authorList>
            <person name="Nemeth E."/>
            <person name="Rivera S."/>
            <person name="Gabayan V."/>
            <person name="Keller C."/>
            <person name="Taudorf S."/>
            <person name="Pedersen B.K."/>
            <person name="Ganz T."/>
        </authorList>
    </citation>
    <scope>FUNCTION</scope>
</reference>
<reference key="21">
    <citation type="journal article" date="2006" name="Arthritis Rheum.">
        <title>Impaired skeletal development in interleukin-6-transgenic mice: a model for the impact of chronic inflammation on the growing skeletal system.</title>
        <authorList>
            <person name="De Benedetti F."/>
            <person name="Rucci N."/>
            <person name="Del Fattore A."/>
            <person name="Peruzzi B."/>
            <person name="Paro R."/>
            <person name="Longo M."/>
            <person name="Vivarelli M."/>
            <person name="Muratori F."/>
            <person name="Berni S."/>
            <person name="Ballanti P."/>
            <person name="Ferrari S."/>
            <person name="Teti A."/>
        </authorList>
    </citation>
    <scope>FUNCTION</scope>
</reference>
<reference key="22">
    <citation type="journal article" date="2010" name="Am. J. Physiol.">
        <title>IL-6 selectively stimulates fat metabolism in human skeletal muscle.</title>
        <authorList>
            <person name="Wolsk E."/>
            <person name="Mygind H."/>
            <person name="Groendahl T.S."/>
            <person name="Pedersen B.K."/>
            <person name="van Hall G."/>
        </authorList>
    </citation>
    <scope>FUNCTION</scope>
</reference>
<reference key="23">
    <citation type="journal article" date="2011" name="Nat. Med.">
        <title>Interleukin-6 enhances insulin secretion by increasing glucagon-like peptide-1 secretion from L cells and alpha cells.</title>
        <authorList>
            <person name="Ellingsgaard H."/>
            <person name="Hauselmann I."/>
            <person name="Schuler B."/>
            <person name="Habib A.M."/>
            <person name="Baggio L.L."/>
            <person name="Meier D.T."/>
            <person name="Eppler E."/>
            <person name="Bouzakri K."/>
            <person name="Wueest S."/>
            <person name="Muller Y.D."/>
            <person name="Hansen A.M."/>
            <person name="Reinecke M."/>
            <person name="Konrad D."/>
            <person name="Gassmann M."/>
            <person name="Reimann F."/>
            <person name="Halban P.A."/>
            <person name="Gromada J."/>
            <person name="Drucker D.J."/>
            <person name="Gribble F.M."/>
            <person name="Ehses J.A."/>
            <person name="Donath M.Y."/>
        </authorList>
    </citation>
    <scope>FUNCTION</scope>
</reference>
<reference key="24">
    <citation type="journal article" date="2015" name="Cell">
        <title>A single kinase generates the majority of the secreted phosphoproteome.</title>
        <authorList>
            <person name="Tagliabracci V.S."/>
            <person name="Wiley S.E."/>
            <person name="Guo X."/>
            <person name="Kinch L.N."/>
            <person name="Durrant E."/>
            <person name="Wen J."/>
            <person name="Xiao J."/>
            <person name="Cui J."/>
            <person name="Nguyen K.B."/>
            <person name="Engel J.L."/>
            <person name="Coon J.J."/>
            <person name="Grishin N."/>
            <person name="Pinna L.A."/>
            <person name="Pagliarini D.J."/>
            <person name="Dixon J.E."/>
        </authorList>
    </citation>
    <scope>PHOSPHORYLATION AT SER-81</scope>
</reference>
<reference key="25">
    <citation type="journal article" date="2015" name="Nature">
        <title>A gp130-Src-YAP module links inflammation to epithelial regeneration.</title>
        <authorList>
            <person name="Taniguchi K."/>
            <person name="Wu L.W."/>
            <person name="Grivennikov S.I."/>
            <person name="de Jong P.R."/>
            <person name="Lian I."/>
            <person name="Yu F.X."/>
            <person name="Wang K."/>
            <person name="Ho S.B."/>
            <person name="Boland B.S."/>
            <person name="Chang J.T."/>
            <person name="Sandborn W.J."/>
            <person name="Hardiman G."/>
            <person name="Raz E."/>
            <person name="Maehara Y."/>
            <person name="Yoshimura A."/>
            <person name="Zucman-Rossi J."/>
            <person name="Guan K.L."/>
            <person name="Karin M."/>
        </authorList>
    </citation>
    <scope>FUNCTION</scope>
</reference>
<reference key="26">
    <citation type="journal article" date="2017" name="Mol. Cell. Biol.">
        <title>SorLA in Interleukin-6 Signaling and Turnover.</title>
        <authorList>
            <person name="Larsen J.V."/>
            <person name="Petersen C.M."/>
        </authorList>
    </citation>
    <scope>INTERACTION WITH IL6R AND SORL1</scope>
</reference>
<reference key="27">
    <citation type="journal article" date="2019" name="Immunity">
        <title>Targeting Interleukin-6 Signaling in Clinic.</title>
        <authorList>
            <person name="Kang S."/>
            <person name="Tanaka T."/>
            <person name="Narazaki M."/>
            <person name="Kishimoto T."/>
        </authorList>
    </citation>
    <scope>REVIEW ON FUNCTION</scope>
</reference>
<reference key="28">
    <citation type="journal article" date="2021" name="Cells">
        <title>Coagulation Factor Xa Induces Proinflammatory Responses in Cardiac Fibroblasts via Activation of Protease-Activated Receptor-1.</title>
        <authorList>
            <person name="D'Alessandro E."/>
            <person name="Scaf B."/>
            <person name="Munts C."/>
            <person name="van Hunnik A."/>
            <person name="Trevelyan C.J."/>
            <person name="Verheule S."/>
            <person name="Spronk H.M.H."/>
            <person name="Turner N.A."/>
            <person name="Ten Cate H."/>
            <person name="Schotten U."/>
            <person name="van Nieuwenhoven F.A."/>
        </authorList>
    </citation>
    <scope>INDUCTION BY F10</scope>
</reference>
<reference key="29">
    <citation type="journal article" date="1996" name="Biochemistry">
        <title>Folding topologies of human interleukin-6 and its mutants as studied by NMR spectroscopy.</title>
        <authorList>
            <person name="Nishimura C."/>
            <person name="Watanabe A."/>
            <person name="Gouda H."/>
            <person name="Shimada I."/>
            <person name="Arata Y."/>
        </authorList>
    </citation>
    <scope>STRUCTURE BY NMR</scope>
</reference>
<reference key="30">
    <citation type="journal article" date="1997" name="J. Mol. Biol.">
        <title>Solution structure of recombinant human interleukin-6.</title>
        <authorList>
            <person name="Xu G.-Y."/>
            <person name="Yu H.-A."/>
            <person name="Hong J."/>
            <person name="Stahl M."/>
            <person name="McDonagh T."/>
            <person name="Kay L.E."/>
            <person name="Cumming D.A."/>
        </authorList>
    </citation>
    <scope>STRUCTURE BY NMR</scope>
</reference>
<reference key="31">
    <citation type="journal article" date="1997" name="EMBO J.">
        <title>1.9-A crystal structure of interleukin 6: implications for a novel mode of receptor dimerization and signaling.</title>
        <authorList>
            <person name="Somers W."/>
            <person name="Stahl M."/>
            <person name="Seehra J.S."/>
        </authorList>
    </citation>
    <scope>X-RAY CRYSTALLOGRAPHY (1.9 ANGSTROMS)</scope>
</reference>
<reference evidence="24" key="32">
    <citation type="journal article" date="2003" name="Science">
        <title>Hexameric structure and assembly of the interleukin-6/IL-6 alpha-receptor/gp130 complex.</title>
        <authorList>
            <person name="Boulanger M.J."/>
            <person name="Chow D.C."/>
            <person name="Brevnova E.E."/>
            <person name="Garcia K.C."/>
        </authorList>
    </citation>
    <scope>X-RAY CRYSTALLOGRAPHY (3.65 ANGSTROMS) OF 29-212 IN COMPLEX WITH IL6ST AND IL6R</scope>
    <scope>SUBUNIT</scope>
</reference>
<reference key="33">
    <citation type="journal article" date="1998" name="J. Clin. Invest.">
        <title>The effect of novel polymorphisms in the interleukin-6 (IL-6) gene on IL-6 transcription and plasma IL-6 levels, and an association with systemic-onset juvenile chronic arthritis.</title>
        <authorList>
            <person name="Fishman D."/>
            <person name="Faulds G."/>
            <person name="Jeffery R."/>
            <person name="Mohamed-Ali V."/>
            <person name="Yudkin J.S."/>
            <person name="Humphries S."/>
            <person name="Woo P."/>
        </authorList>
    </citation>
    <scope>INVOLVEMENT IN RASJ</scope>
</reference>
<reference key="34">
    <citation type="journal article" date="2000" name="Blood">
        <title>An IL6 promoter polymorphism is associated with a lifetime risk of development of Kaposi sarcoma in men infected with human immunodeficiency virus.</title>
        <authorList>
            <person name="Foster C.B."/>
            <person name="Lehrnbecher T."/>
            <person name="Samuels S."/>
            <person name="Stein S."/>
            <person name="Mol F."/>
            <person name="Metcalf J.A."/>
            <person name="Wyvill K."/>
            <person name="Steinberg S.M."/>
            <person name="Kovacs J."/>
            <person name="Blauvelt A."/>
            <person name="Yarchoan R."/>
            <person name="Chanock S.J."/>
        </authorList>
    </citation>
    <scope>INVOLVEMENT IN SUSCEPTIBILITY TO KAPOSI SARCOMA</scope>
</reference>
<reference key="35">
    <citation type="journal article" date="2001" name="J. Hum. Genet.">
        <title>A nucleotide variant in the promoter region of the interleukin-6 gene associated with decreased bone mineral density.</title>
        <authorList>
            <person name="Ota N."/>
            <person name="Nakajima T."/>
            <person name="Nakazawa I."/>
            <person name="Suzuki T."/>
            <person name="Hosoi T."/>
            <person name="Orimo H."/>
            <person name="Inoue S."/>
            <person name="Shirai Y."/>
            <person name="Emi M."/>
        </authorList>
    </citation>
    <scope>INVOLVEMENT IN BMD</scope>
</reference>
<reference key="36">
    <citation type="journal article" date="2003" name="J. Hum. Genet.">
        <title>Association of interleukin-6 promoter variant with bone mineral density in pre-menopausal women.</title>
        <authorList>
            <person name="Chung H.W."/>
            <person name="Seo J.-S."/>
            <person name="Hur S.E."/>
            <person name="Kim H.L."/>
            <person name="Kim J.Y."/>
            <person name="Jung J.H."/>
            <person name="Kim L.H."/>
            <person name="Park B.L."/>
            <person name="Shin H.D."/>
        </authorList>
    </citation>
    <scope>INVOLVEMENT IN BMD</scope>
</reference>
<organism>
    <name type="scientific">Homo sapiens</name>
    <name type="common">Human</name>
    <dbReference type="NCBI Taxonomy" id="9606"/>
    <lineage>
        <taxon>Eukaryota</taxon>
        <taxon>Metazoa</taxon>
        <taxon>Chordata</taxon>
        <taxon>Craniata</taxon>
        <taxon>Vertebrata</taxon>
        <taxon>Euteleostomi</taxon>
        <taxon>Mammalia</taxon>
        <taxon>Eutheria</taxon>
        <taxon>Euarchontoglires</taxon>
        <taxon>Primates</taxon>
        <taxon>Haplorrhini</taxon>
        <taxon>Catarrhini</taxon>
        <taxon>Hominidae</taxon>
        <taxon>Homo</taxon>
    </lineage>
</organism>
<gene>
    <name evidence="23" type="primary">IL6</name>
    <name type="synonym">IFNB2</name>
</gene>
<accession>P05231</accession>
<accession>Q9UCU2</accession>
<accession>Q9UCU3</accession>
<accession>Q9UCU4</accession>
<evidence type="ECO:0000250" key="1">
    <source>
        <dbReference type="UniProtKB" id="P08505"/>
    </source>
</evidence>
<evidence type="ECO:0000269" key="2">
    <source>
    </source>
</evidence>
<evidence type="ECO:0000269" key="3">
    <source>
    </source>
</evidence>
<evidence type="ECO:0000269" key="4">
    <source>
    </source>
</evidence>
<evidence type="ECO:0000269" key="5">
    <source>
    </source>
</evidence>
<evidence type="ECO:0000269" key="6">
    <source>
    </source>
</evidence>
<evidence type="ECO:0000269" key="7">
    <source>
    </source>
</evidence>
<evidence type="ECO:0000269" key="8">
    <source>
    </source>
</evidence>
<evidence type="ECO:0000269" key="9">
    <source>
    </source>
</evidence>
<evidence type="ECO:0000269" key="10">
    <source>
    </source>
</evidence>
<evidence type="ECO:0000269" key="11">
    <source>
    </source>
</evidence>
<evidence type="ECO:0000269" key="12">
    <source>
    </source>
</evidence>
<evidence type="ECO:0000269" key="13">
    <source>
    </source>
</evidence>
<evidence type="ECO:0000269" key="14">
    <source>
    </source>
</evidence>
<evidence type="ECO:0000269" key="15">
    <source>
    </source>
</evidence>
<evidence type="ECO:0000269" key="16">
    <source>
    </source>
</evidence>
<evidence type="ECO:0000269" key="17">
    <source>
    </source>
</evidence>
<evidence type="ECO:0000269" key="18">
    <source>
    </source>
</evidence>
<evidence type="ECO:0000269" key="19">
    <source>
    </source>
</evidence>
<evidence type="ECO:0000269" key="20">
    <source ref="10"/>
</evidence>
<evidence type="ECO:0000305" key="21"/>
<evidence type="ECO:0000305" key="22">
    <source>
    </source>
</evidence>
<evidence type="ECO:0000312" key="23">
    <source>
        <dbReference type="HGNC" id="HGNC:6018"/>
    </source>
</evidence>
<evidence type="ECO:0007744" key="24">
    <source>
        <dbReference type="PDB" id="1P9M"/>
    </source>
</evidence>
<evidence type="ECO:0007829" key="25">
    <source>
        <dbReference type="PDB" id="1ALU"/>
    </source>
</evidence>
<evidence type="ECO:0007829" key="26">
    <source>
        <dbReference type="PDB" id="2IL6"/>
    </source>
</evidence>
<evidence type="ECO:0007829" key="27">
    <source>
        <dbReference type="PDB" id="4CNI"/>
    </source>
</evidence>
<evidence type="ECO:0007829" key="28">
    <source>
        <dbReference type="PDB" id="4J4L"/>
    </source>
</evidence>
<sequence>MNSFSTSAFGPVAFSLGLLLVLPAAFPAPVPPGEDSKDVAAPHRQPLTSSERIDKQIRYILDGISALRKETCNKSNMCESSKEALAENNLNLPKMAEKDGCFQSGFNEETCLVKIITGLLEFEVYLEYLQNRFESSEEQARAVQMSTKVLIQFLQKKAKNLDAITTPDPTTNASLLTKLQAQNQWLQDMTTHLILRSFKEFLQSSLRALRQM</sequence>
<keyword id="KW-0002">3D-structure</keyword>
<keyword id="KW-0011">Acute phase</keyword>
<keyword id="KW-0202">Cytokine</keyword>
<keyword id="KW-0903">Direct protein sequencing</keyword>
<keyword id="KW-1015">Disulfide bond</keyword>
<keyword id="KW-0325">Glycoprotein</keyword>
<keyword id="KW-0339">Growth factor</keyword>
<keyword id="KW-0597">Phosphoprotein</keyword>
<keyword id="KW-1267">Proteomics identification</keyword>
<keyword id="KW-1185">Reference proteome</keyword>
<keyword id="KW-0964">Secreted</keyword>
<keyword id="KW-0732">Signal</keyword>
<dbReference type="EMBL" id="X04430">
    <property type="protein sequence ID" value="CAA28026.1"/>
    <property type="molecule type" value="mRNA"/>
</dbReference>
<dbReference type="EMBL" id="M14584">
    <property type="protein sequence ID" value="AAA52728.1"/>
    <property type="molecule type" value="mRNA"/>
</dbReference>
<dbReference type="EMBL" id="X04602">
    <property type="protein sequence ID" value="CAA28268.1"/>
    <property type="molecule type" value="mRNA"/>
</dbReference>
<dbReference type="EMBL" id="Y00081">
    <property type="protein sequence ID" value="CAA68278.1"/>
    <property type="molecule type" value="Genomic_DNA"/>
</dbReference>
<dbReference type="EMBL" id="M18403">
    <property type="protein sequence ID" value="AAA52729.1"/>
    <property type="molecule type" value="mRNA"/>
</dbReference>
<dbReference type="EMBL" id="M29150">
    <property type="protein sequence ID" value="AAA59154.1"/>
    <property type="molecule type" value="mRNA"/>
</dbReference>
<dbReference type="EMBL" id="X04402">
    <property type="protein sequence ID" value="CAA27990.1"/>
    <property type="molecule type" value="Genomic_DNA"/>
</dbReference>
<dbReference type="EMBL" id="X04403">
    <property type="protein sequence ID" value="CAA27991.1"/>
    <property type="molecule type" value="mRNA"/>
</dbReference>
<dbReference type="EMBL" id="M54894">
    <property type="protein sequence ID" value="AAC41704.1"/>
    <property type="molecule type" value="mRNA"/>
</dbReference>
<dbReference type="EMBL" id="S56892">
    <property type="protein sequence ID" value="AAD13886.1"/>
    <property type="molecule type" value="mRNA"/>
</dbReference>
<dbReference type="EMBL" id="AF372214">
    <property type="protein sequence ID" value="AAK48987.1"/>
    <property type="molecule type" value="Genomic_DNA"/>
</dbReference>
<dbReference type="EMBL" id="BC015511">
    <property type="protein sequence ID" value="AAH15511.1"/>
    <property type="molecule type" value="mRNA"/>
</dbReference>
<dbReference type="CCDS" id="CCDS5375.1"/>
<dbReference type="PIR" id="A32648">
    <property type="entry name" value="IVHUB2"/>
</dbReference>
<dbReference type="RefSeq" id="NP_000591.1">
    <property type="nucleotide sequence ID" value="NM_000600.5"/>
</dbReference>
<dbReference type="RefSeq" id="XP_011513692.1">
    <property type="nucleotide sequence ID" value="XM_011515390.2"/>
</dbReference>
<dbReference type="RefSeq" id="XP_054214121.1">
    <property type="nucleotide sequence ID" value="XM_054358146.1"/>
</dbReference>
<dbReference type="PDB" id="1ALU">
    <property type="method" value="X-ray"/>
    <property type="resolution" value="1.90 A"/>
    <property type="chains" value="A=28-212"/>
</dbReference>
<dbReference type="PDB" id="1IL6">
    <property type="method" value="NMR"/>
    <property type="chains" value="A=28-212"/>
</dbReference>
<dbReference type="PDB" id="1P9M">
    <property type="method" value="X-ray"/>
    <property type="resolution" value="3.65 A"/>
    <property type="chains" value="B=29-212"/>
</dbReference>
<dbReference type="PDB" id="2IL6">
    <property type="method" value="NMR"/>
    <property type="chains" value="A=28-212"/>
</dbReference>
<dbReference type="PDB" id="4CNI">
    <property type="method" value="X-ray"/>
    <property type="resolution" value="2.20 A"/>
    <property type="chains" value="C/D=42-212"/>
</dbReference>
<dbReference type="PDB" id="4J4L">
    <property type="method" value="X-ray"/>
    <property type="resolution" value="2.30 A"/>
    <property type="chains" value="C/D=47-212"/>
</dbReference>
<dbReference type="PDB" id="4NI7">
    <property type="method" value="X-ray"/>
    <property type="resolution" value="2.40 A"/>
    <property type="chains" value="A=28-212"/>
</dbReference>
<dbReference type="PDB" id="4NI9">
    <property type="method" value="X-ray"/>
    <property type="resolution" value="2.55 A"/>
    <property type="chains" value="A/C=28-212"/>
</dbReference>
<dbReference type="PDB" id="4O9H">
    <property type="method" value="X-ray"/>
    <property type="resolution" value="2.42 A"/>
    <property type="chains" value="A=28-212"/>
</dbReference>
<dbReference type="PDB" id="4ZS7">
    <property type="method" value="X-ray"/>
    <property type="resolution" value="2.93 A"/>
    <property type="chains" value="A=42-212"/>
</dbReference>
<dbReference type="PDB" id="5FUC">
    <property type="method" value="X-ray"/>
    <property type="resolution" value="2.70 A"/>
    <property type="chains" value="A/B=49-212"/>
</dbReference>
<dbReference type="PDB" id="7NXZ">
    <property type="method" value="X-ray"/>
    <property type="resolution" value="2.00 A"/>
    <property type="chains" value="AAA=30-212"/>
</dbReference>
<dbReference type="PDB" id="8D82">
    <property type="method" value="EM"/>
    <property type="resolution" value="3.22 A"/>
    <property type="chains" value="D/H=30-212"/>
</dbReference>
<dbReference type="PDB" id="8QY5">
    <property type="method" value="EM"/>
    <property type="resolution" value="3.10 A"/>
    <property type="chains" value="B/E=1-212"/>
</dbReference>
<dbReference type="PDB" id="8QY6">
    <property type="method" value="EM"/>
    <property type="resolution" value="3.16 A"/>
    <property type="chains" value="B/E=1-212"/>
</dbReference>
<dbReference type="PDB" id="8YWQ">
    <property type="method" value="X-ray"/>
    <property type="resolution" value="2.51 A"/>
    <property type="chains" value="A=28-212"/>
</dbReference>
<dbReference type="PDB" id="8YWR">
    <property type="method" value="X-ray"/>
    <property type="resolution" value="2.93 A"/>
    <property type="chains" value="A=42-212"/>
</dbReference>
<dbReference type="PDBsum" id="1ALU"/>
<dbReference type="PDBsum" id="1IL6"/>
<dbReference type="PDBsum" id="1P9M"/>
<dbReference type="PDBsum" id="2IL6"/>
<dbReference type="PDBsum" id="4CNI"/>
<dbReference type="PDBsum" id="4J4L"/>
<dbReference type="PDBsum" id="4NI7"/>
<dbReference type="PDBsum" id="4NI9"/>
<dbReference type="PDBsum" id="4O9H"/>
<dbReference type="PDBsum" id="4ZS7"/>
<dbReference type="PDBsum" id="5FUC"/>
<dbReference type="PDBsum" id="7NXZ"/>
<dbReference type="PDBsum" id="8D82"/>
<dbReference type="PDBsum" id="8QY5"/>
<dbReference type="PDBsum" id="8QY6"/>
<dbReference type="PDBsum" id="8YWQ"/>
<dbReference type="PDBsum" id="8YWR"/>
<dbReference type="EMDB" id="EMD-18742"/>
<dbReference type="EMDB" id="EMD-18743"/>
<dbReference type="EMDB" id="EMD-27244"/>
<dbReference type="SMR" id="P05231"/>
<dbReference type="BioGRID" id="109783">
    <property type="interactions" value="13"/>
</dbReference>
<dbReference type="ComplexPortal" id="CPX-623">
    <property type="entry name" value="Interleukin 6-mIL6R-mIL6ST receptor-ligand classical signalling complex"/>
</dbReference>
<dbReference type="ComplexPortal" id="CPX-8936">
    <property type="entry name" value="Interleukin-6 antagonist complex"/>
</dbReference>
<dbReference type="ComplexPortal" id="CPX-8967">
    <property type="entry name" value="Interleukin-6 sIL6R-mIL6ST receptor-ligand trans-signalling complex"/>
</dbReference>
<dbReference type="ComplexPortal" id="CPX-8968">
    <property type="entry name" value="Membrane bound interleukin-6 mIL6R receptor-ligand cluster-signalling complex"/>
</dbReference>
<dbReference type="ComplexPortal" id="CPX-8969">
    <property type="entry name" value="Interleukin-6 sIL6R-sIL6ST buffering receptor-ligand complex"/>
</dbReference>
<dbReference type="CORUM" id="P05231"/>
<dbReference type="DIP" id="DIP-482N"/>
<dbReference type="FunCoup" id="P05231">
    <property type="interactions" value="1187"/>
</dbReference>
<dbReference type="IntAct" id="P05231">
    <property type="interactions" value="8"/>
</dbReference>
<dbReference type="STRING" id="9606.ENSP00000385675"/>
<dbReference type="BindingDB" id="P05231"/>
<dbReference type="ChEMBL" id="CHEMBL1795129"/>
<dbReference type="DrugBank" id="DB05767">
    <property type="generic name" value="Andrographolide"/>
</dbReference>
<dbReference type="DrugBank" id="DB05513">
    <property type="generic name" value="Atiprimod"/>
</dbReference>
<dbReference type="DrugBank" id="DB06017">
    <property type="generic name" value="C326"/>
</dbReference>
<dbReference type="DrugBank" id="DB05744">
    <property type="generic name" value="CRx-139"/>
</dbReference>
<dbReference type="DrugBank" id="DB12140">
    <property type="generic name" value="Dilmapimod"/>
</dbReference>
<dbReference type="DrugBank" id="DB10770">
    <property type="generic name" value="Foreskin fibroblast (neonatal)"/>
</dbReference>
<dbReference type="DrugBank" id="DB10772">
    <property type="generic name" value="Foreskin keratinocyte (neonatal)"/>
</dbReference>
<dbReference type="DrugBank" id="DB01404">
    <property type="generic name" value="Ginseng"/>
</dbReference>
<dbReference type="DrugBank" id="DB13127">
    <property type="generic name" value="Olokizumab"/>
</dbReference>
<dbReference type="DrugBank" id="DB09221">
    <property type="generic name" value="Polaprezinc"/>
</dbReference>
<dbReference type="DrugBank" id="DB09036">
    <property type="generic name" value="Siltuximab"/>
</dbReference>
<dbReference type="DrugBank" id="DB05470">
    <property type="generic name" value="VX-702"/>
</dbReference>
<dbReference type="DrugBank" id="DB05017">
    <property type="generic name" value="YSIL6"/>
</dbReference>
<dbReference type="DrugCentral" id="P05231"/>
<dbReference type="GlyCosmos" id="P05231">
    <property type="glycosylation" value="1 site, No reported glycans"/>
</dbReference>
<dbReference type="GlyGen" id="P05231">
    <property type="glycosylation" value="2 sites"/>
</dbReference>
<dbReference type="iPTMnet" id="P05231"/>
<dbReference type="MetOSite" id="P05231"/>
<dbReference type="PhosphoSitePlus" id="P05231"/>
<dbReference type="BioMuta" id="IL6"/>
<dbReference type="DMDM" id="124347"/>
<dbReference type="jPOST" id="P05231"/>
<dbReference type="MassIVE" id="P05231"/>
<dbReference type="PaxDb" id="9606-ENSP00000385675"/>
<dbReference type="PeptideAtlas" id="P05231"/>
<dbReference type="ProteomicsDB" id="51828"/>
<dbReference type="ABCD" id="P05231">
    <property type="antibodies" value="185 sequenced antibodies"/>
</dbReference>
<dbReference type="Antibodypedia" id="12025">
    <property type="antibodies" value="3224 antibodies from 54 providers"/>
</dbReference>
<dbReference type="CPTC" id="P05231">
    <property type="antibodies" value="3 antibodies"/>
</dbReference>
<dbReference type="DNASU" id="3569"/>
<dbReference type="Ensembl" id="ENST00000258743.10">
    <property type="protein sequence ID" value="ENSP00000258743.5"/>
    <property type="gene ID" value="ENSG00000136244.12"/>
</dbReference>
<dbReference type="Ensembl" id="ENST00000404625.5">
    <property type="protein sequence ID" value="ENSP00000385675.1"/>
    <property type="gene ID" value="ENSG00000136244.12"/>
</dbReference>
<dbReference type="GeneID" id="3569"/>
<dbReference type="KEGG" id="hsa:3569"/>
<dbReference type="MANE-Select" id="ENST00000258743.10">
    <property type="protein sequence ID" value="ENSP00000258743.5"/>
    <property type="RefSeq nucleotide sequence ID" value="NM_000600.5"/>
    <property type="RefSeq protein sequence ID" value="NP_000591.1"/>
</dbReference>
<dbReference type="AGR" id="HGNC:6018"/>
<dbReference type="CTD" id="3569"/>
<dbReference type="DisGeNET" id="3569"/>
<dbReference type="GeneCards" id="IL6"/>
<dbReference type="HGNC" id="HGNC:6018">
    <property type="gene designation" value="IL6"/>
</dbReference>
<dbReference type="HPA" id="ENSG00000136244">
    <property type="expression patterns" value="Tissue enhanced (adipose tissue, urinary bladder)"/>
</dbReference>
<dbReference type="MalaCards" id="IL6"/>
<dbReference type="MIM" id="147620">
    <property type="type" value="gene"/>
</dbReference>
<dbReference type="MIM" id="148000">
    <property type="type" value="phenotype"/>
</dbReference>
<dbReference type="MIM" id="604302">
    <property type="type" value="phenotype"/>
</dbReference>
<dbReference type="neXtProt" id="NX_P05231"/>
<dbReference type="OpenTargets" id="ENSG00000136244"/>
<dbReference type="Orphanet" id="85414">
    <property type="disease" value="Systemic-onset juvenile idiopathic arthritis"/>
</dbReference>
<dbReference type="PharmGKB" id="PA198"/>
<dbReference type="VEuPathDB" id="HostDB:ENSG00000136244"/>
<dbReference type="eggNOG" id="ENOG502S7Q4">
    <property type="taxonomic scope" value="Eukaryota"/>
</dbReference>
<dbReference type="GeneTree" id="ENSGT00390000000878"/>
<dbReference type="InParanoid" id="P05231"/>
<dbReference type="OMA" id="FSKCENS"/>
<dbReference type="OrthoDB" id="8943569at2759"/>
<dbReference type="PAN-GO" id="P05231">
    <property type="GO annotations" value="6 GO annotations based on evolutionary models"/>
</dbReference>
<dbReference type="PhylomeDB" id="P05231"/>
<dbReference type="TreeFam" id="TF335984"/>
<dbReference type="PathwayCommons" id="P05231"/>
<dbReference type="Reactome" id="R-HSA-1059683">
    <property type="pathway name" value="Interleukin-6 signaling"/>
</dbReference>
<dbReference type="Reactome" id="R-HSA-110056">
    <property type="pathway name" value="MAPK3 (ERK1) activation"/>
</dbReference>
<dbReference type="Reactome" id="R-HSA-112411">
    <property type="pathway name" value="MAPK1 (ERK2) activation"/>
</dbReference>
<dbReference type="Reactome" id="R-HSA-2559582">
    <property type="pathway name" value="Senescence-Associated Secretory Phenotype (SASP)"/>
</dbReference>
<dbReference type="Reactome" id="R-HSA-381426">
    <property type="pathway name" value="Regulation of Insulin-like Growth Factor (IGF) transport and uptake by Insulin-like Growth Factor Binding Proteins (IGFBPs)"/>
</dbReference>
<dbReference type="Reactome" id="R-HSA-6783783">
    <property type="pathway name" value="Interleukin-10 signaling"/>
</dbReference>
<dbReference type="Reactome" id="R-HSA-6785807">
    <property type="pathway name" value="Interleukin-4 and Interleukin-13 signaling"/>
</dbReference>
<dbReference type="Reactome" id="R-HSA-8853884">
    <property type="pathway name" value="Transcriptional Regulation by VENTX"/>
</dbReference>
<dbReference type="Reactome" id="R-HSA-8957275">
    <property type="pathway name" value="Post-translational protein phosphorylation"/>
</dbReference>
<dbReference type="Reactome" id="R-HSA-9660821">
    <property type="pathway name" value="ADORA2B mediated anti-inflammatory cytokines production"/>
</dbReference>
<dbReference type="Reactome" id="R-HSA-9662834">
    <property type="pathway name" value="CD163 mediating an anti-inflammatory response"/>
</dbReference>
<dbReference type="SignaLink" id="P05231"/>
<dbReference type="SIGNOR" id="P05231"/>
<dbReference type="BioGRID-ORCS" id="3569">
    <property type="hits" value="8 hits in 1164 CRISPR screens"/>
</dbReference>
<dbReference type="ChiTaRS" id="IL6">
    <property type="organism name" value="human"/>
</dbReference>
<dbReference type="EvolutionaryTrace" id="P05231"/>
<dbReference type="GeneWiki" id="Interleukin_6"/>
<dbReference type="GenomeRNAi" id="3569"/>
<dbReference type="Pharos" id="P05231">
    <property type="development level" value="Tclin"/>
</dbReference>
<dbReference type="PRO" id="PR:P05231"/>
<dbReference type="Proteomes" id="UP000005640">
    <property type="component" value="Chromosome 7"/>
</dbReference>
<dbReference type="RNAct" id="P05231">
    <property type="molecule type" value="protein"/>
</dbReference>
<dbReference type="Bgee" id="ENSG00000136244">
    <property type="expression patterns" value="Expressed in cartilage tissue and 129 other cell types or tissues"/>
</dbReference>
<dbReference type="ExpressionAtlas" id="P05231">
    <property type="expression patterns" value="baseline and differential"/>
</dbReference>
<dbReference type="GO" id="GO:0005788">
    <property type="term" value="C:endoplasmic reticulum lumen"/>
    <property type="evidence" value="ECO:0000304"/>
    <property type="project" value="Reactome"/>
</dbReference>
<dbReference type="GO" id="GO:0005576">
    <property type="term" value="C:extracellular region"/>
    <property type="evidence" value="ECO:0000304"/>
    <property type="project" value="Reactome"/>
</dbReference>
<dbReference type="GO" id="GO:0005615">
    <property type="term" value="C:extracellular space"/>
    <property type="evidence" value="ECO:0000314"/>
    <property type="project" value="BHF-UCL"/>
</dbReference>
<dbReference type="GO" id="GO:0005896">
    <property type="term" value="C:interleukin-6 receptor complex"/>
    <property type="evidence" value="ECO:0000314"/>
    <property type="project" value="BHF-UCL"/>
</dbReference>
<dbReference type="GO" id="GO:0005125">
    <property type="term" value="F:cytokine activity"/>
    <property type="evidence" value="ECO:0000314"/>
    <property type="project" value="BHF-UCL"/>
</dbReference>
<dbReference type="GO" id="GO:0008083">
    <property type="term" value="F:growth factor activity"/>
    <property type="evidence" value="ECO:0000314"/>
    <property type="project" value="BHF-UCL"/>
</dbReference>
<dbReference type="GO" id="GO:0042802">
    <property type="term" value="F:identical protein binding"/>
    <property type="evidence" value="ECO:0000353"/>
    <property type="project" value="IntAct"/>
</dbReference>
<dbReference type="GO" id="GO:0005138">
    <property type="term" value="F:interleukin-6 receptor binding"/>
    <property type="evidence" value="ECO:0000353"/>
    <property type="project" value="BHF-UCL"/>
</dbReference>
<dbReference type="GO" id="GO:0006953">
    <property type="term" value="P:acute-phase response"/>
    <property type="evidence" value="ECO:0000304"/>
    <property type="project" value="BHF-UCL"/>
</dbReference>
<dbReference type="GO" id="GO:0007259">
    <property type="term" value="P:cell surface receptor signaling pathway via JAK-STAT"/>
    <property type="evidence" value="ECO:0000315"/>
    <property type="project" value="ARUK-UCL"/>
</dbReference>
<dbReference type="GO" id="GO:0097696">
    <property type="term" value="P:cell surface receptor signaling pathway via STAT"/>
    <property type="evidence" value="ECO:0000314"/>
    <property type="project" value="BHF-UCL"/>
</dbReference>
<dbReference type="GO" id="GO:0070301">
    <property type="term" value="P:cellular response to hydrogen peroxide"/>
    <property type="evidence" value="ECO:0000314"/>
    <property type="project" value="BHF-UCL"/>
</dbReference>
<dbReference type="GO" id="GO:0071222">
    <property type="term" value="P:cellular response to lipopolysaccharide"/>
    <property type="evidence" value="ECO:0000315"/>
    <property type="project" value="MGI"/>
</dbReference>
<dbReference type="GO" id="GO:0098586">
    <property type="term" value="P:cellular response to virus"/>
    <property type="evidence" value="ECO:0000250"/>
    <property type="project" value="UniProtKB"/>
</dbReference>
<dbReference type="GO" id="GO:0019221">
    <property type="term" value="P:cytokine-mediated signaling pathway"/>
    <property type="evidence" value="ECO:0000314"/>
    <property type="project" value="BHF-UCL"/>
</dbReference>
<dbReference type="GO" id="GO:0050829">
    <property type="term" value="P:defense response to Gram-negative bacterium"/>
    <property type="evidence" value="ECO:0000304"/>
    <property type="project" value="BHF-UCL"/>
</dbReference>
<dbReference type="GO" id="GO:0050830">
    <property type="term" value="P:defense response to Gram-positive bacterium"/>
    <property type="evidence" value="ECO:0000304"/>
    <property type="project" value="BHF-UCL"/>
</dbReference>
<dbReference type="GO" id="GO:0051607">
    <property type="term" value="P:defense response to virus"/>
    <property type="evidence" value="ECO:0000314"/>
    <property type="project" value="BHF-UCL"/>
</dbReference>
<dbReference type="GO" id="GO:0031018">
    <property type="term" value="P:endocrine pancreas development"/>
    <property type="evidence" value="ECO:0000250"/>
    <property type="project" value="BHF-UCL"/>
</dbReference>
<dbReference type="GO" id="GO:0002314">
    <property type="term" value="P:germinal center B cell differentiation"/>
    <property type="evidence" value="ECO:0000250"/>
    <property type="project" value="UniProtKB"/>
</dbReference>
<dbReference type="GO" id="GO:0070091">
    <property type="term" value="P:glucagon secretion"/>
    <property type="evidence" value="ECO:0000250"/>
    <property type="project" value="BHF-UCL"/>
</dbReference>
<dbReference type="GO" id="GO:0042593">
    <property type="term" value="P:glucose homeostasis"/>
    <property type="evidence" value="ECO:0000314"/>
    <property type="project" value="UniProtKB"/>
</dbReference>
<dbReference type="GO" id="GO:0002384">
    <property type="term" value="P:hepatic immune response"/>
    <property type="evidence" value="ECO:0000314"/>
    <property type="project" value="BHF-UCL"/>
</dbReference>
<dbReference type="GO" id="GO:0072574">
    <property type="term" value="P:hepatocyte proliferation"/>
    <property type="evidence" value="ECO:0000250"/>
    <property type="project" value="UniProtKB"/>
</dbReference>
<dbReference type="GO" id="GO:0006959">
    <property type="term" value="P:humoral immune response"/>
    <property type="evidence" value="ECO:0000305"/>
    <property type="project" value="BHF-UCL"/>
</dbReference>
<dbReference type="GO" id="GO:0006954">
    <property type="term" value="P:inflammatory response"/>
    <property type="evidence" value="ECO:0000314"/>
    <property type="project" value="BHF-UCL"/>
</dbReference>
<dbReference type="GO" id="GO:0090594">
    <property type="term" value="P:inflammatory response to wounding"/>
    <property type="evidence" value="ECO:0000314"/>
    <property type="project" value="UniProt"/>
</dbReference>
<dbReference type="GO" id="GO:0070102">
    <property type="term" value="P:interleukin-6-mediated signaling pathway"/>
    <property type="evidence" value="ECO:0000314"/>
    <property type="project" value="BHF-UCL"/>
</dbReference>
<dbReference type="GO" id="GO:0097421">
    <property type="term" value="P:liver regeneration"/>
    <property type="evidence" value="ECO:0000250"/>
    <property type="project" value="UniProtKB"/>
</dbReference>
<dbReference type="GO" id="GO:0035633">
    <property type="term" value="P:maintenance of blood-brain barrier"/>
    <property type="evidence" value="ECO:0000304"/>
    <property type="project" value="ARUK-UCL"/>
</dbReference>
<dbReference type="GO" id="GO:0002548">
    <property type="term" value="P:monocyte chemotaxis"/>
    <property type="evidence" value="ECO:0000305"/>
    <property type="project" value="BHF-UCL"/>
</dbReference>
<dbReference type="GO" id="GO:0043066">
    <property type="term" value="P:negative regulation of apoptotic process"/>
    <property type="evidence" value="ECO:0000314"/>
    <property type="project" value="UniProtKB"/>
</dbReference>
<dbReference type="GO" id="GO:0045779">
    <property type="term" value="P:negative regulation of bone resorption"/>
    <property type="evidence" value="ECO:0000250"/>
    <property type="project" value="BHF-UCL"/>
</dbReference>
<dbReference type="GO" id="GO:0008285">
    <property type="term" value="P:negative regulation of cell population proliferation"/>
    <property type="evidence" value="ECO:0000304"/>
    <property type="project" value="ProtInc"/>
</dbReference>
<dbReference type="GO" id="GO:0032682">
    <property type="term" value="P:negative regulation of chemokine production"/>
    <property type="evidence" value="ECO:0000250"/>
    <property type="project" value="UniProtKB"/>
</dbReference>
<dbReference type="GO" id="GO:0032966">
    <property type="term" value="P:negative regulation of collagen biosynthetic process"/>
    <property type="evidence" value="ECO:0000314"/>
    <property type="project" value="BHF-UCL"/>
</dbReference>
<dbReference type="GO" id="GO:0045599">
    <property type="term" value="P:negative regulation of fat cell differentiation"/>
    <property type="evidence" value="ECO:0000303"/>
    <property type="project" value="BHF-UCL"/>
</dbReference>
<dbReference type="GO" id="GO:2000660">
    <property type="term" value="P:negative regulation of interleukin-1-mediated signaling pathway"/>
    <property type="evidence" value="ECO:0000250"/>
    <property type="project" value="BHF-UCL"/>
</dbReference>
<dbReference type="GO" id="GO:0010888">
    <property type="term" value="P:negative regulation of lipid storage"/>
    <property type="evidence" value="ECO:0000303"/>
    <property type="project" value="BHF-UCL"/>
</dbReference>
<dbReference type="GO" id="GO:0050768">
    <property type="term" value="P:negative regulation of neurogenesis"/>
    <property type="evidence" value="ECO:0000304"/>
    <property type="project" value="ARUK-UCL"/>
</dbReference>
<dbReference type="GO" id="GO:2000635">
    <property type="term" value="P:negative regulation of primary miRNA processing"/>
    <property type="evidence" value="ECO:0000316"/>
    <property type="project" value="ARUK-UCL"/>
</dbReference>
<dbReference type="GO" id="GO:0070050">
    <property type="term" value="P:neuron cellular homeostasis"/>
    <property type="evidence" value="ECO:0000304"/>
    <property type="project" value="ARUK-UCL"/>
</dbReference>
<dbReference type="GO" id="GO:0031175">
    <property type="term" value="P:neuron projection development"/>
    <property type="evidence" value="ECO:0000315"/>
    <property type="project" value="BHF-UCL"/>
</dbReference>
<dbReference type="GO" id="GO:0001781">
    <property type="term" value="P:neutrophil apoptotic process"/>
    <property type="evidence" value="ECO:0000314"/>
    <property type="project" value="UniProtKB"/>
</dbReference>
<dbReference type="GO" id="GO:0002446">
    <property type="term" value="P:neutrophil mediated immunity"/>
    <property type="evidence" value="ECO:0000304"/>
    <property type="project" value="BHF-UCL"/>
</dbReference>
<dbReference type="GO" id="GO:0030168">
    <property type="term" value="P:platelet activation"/>
    <property type="evidence" value="ECO:0000304"/>
    <property type="project" value="BHF-UCL"/>
</dbReference>
<dbReference type="GO" id="GO:0002675">
    <property type="term" value="P:positive regulation of acute inflammatory response"/>
    <property type="evidence" value="ECO:0000314"/>
    <property type="project" value="BHF-UCL"/>
</dbReference>
<dbReference type="GO" id="GO:1902512">
    <property type="term" value="P:positive regulation of apoptotic DNA fragmentation"/>
    <property type="evidence" value="ECO:0000315"/>
    <property type="project" value="ARUK-UCL"/>
</dbReference>
<dbReference type="GO" id="GO:0043065">
    <property type="term" value="P:positive regulation of apoptotic process"/>
    <property type="evidence" value="ECO:0000314"/>
    <property type="project" value="UniProtKB"/>
</dbReference>
<dbReference type="GO" id="GO:0050871">
    <property type="term" value="P:positive regulation of B cell activation"/>
    <property type="evidence" value="ECO:0000314"/>
    <property type="project" value="BHF-UCL"/>
</dbReference>
<dbReference type="GO" id="GO:0008284">
    <property type="term" value="P:positive regulation of cell population proliferation"/>
    <property type="evidence" value="ECO:0000314"/>
    <property type="project" value="BHF-UCL"/>
</dbReference>
<dbReference type="GO" id="GO:0032722">
    <property type="term" value="P:positive regulation of chemokine production"/>
    <property type="evidence" value="ECO:0000314"/>
    <property type="project" value="BHF-UCL"/>
</dbReference>
<dbReference type="GO" id="GO:1900017">
    <property type="term" value="P:positive regulation of cytokine production involved in inflammatory response"/>
    <property type="evidence" value="ECO:0000316"/>
    <property type="project" value="ARUK-UCL"/>
</dbReference>
<dbReference type="GO" id="GO:0051091">
    <property type="term" value="P:positive regulation of DNA-binding transcription factor activity"/>
    <property type="evidence" value="ECO:0000314"/>
    <property type="project" value="BHF-UCL"/>
</dbReference>
<dbReference type="GO" id="GO:0045893">
    <property type="term" value="P:positive regulation of DNA-templated transcription"/>
    <property type="evidence" value="ECO:0000314"/>
    <property type="project" value="UniProtKB"/>
</dbReference>
<dbReference type="GO" id="GO:0010718">
    <property type="term" value="P:positive regulation of epithelial to mesenchymal transition"/>
    <property type="evidence" value="ECO:0000314"/>
    <property type="project" value="ARUK-UCL"/>
</dbReference>
<dbReference type="GO" id="GO:0090091">
    <property type="term" value="P:positive regulation of extracellular matrix disassembly"/>
    <property type="evidence" value="ECO:0000315"/>
    <property type="project" value="ARUK-UCL"/>
</dbReference>
<dbReference type="GO" id="GO:0010628">
    <property type="term" value="P:positive regulation of gene expression"/>
    <property type="evidence" value="ECO:0000314"/>
    <property type="project" value="ARUK-UCL"/>
</dbReference>
<dbReference type="GO" id="GO:0060252">
    <property type="term" value="P:positive regulation of glial cell proliferation"/>
    <property type="evidence" value="ECO:0000314"/>
    <property type="project" value="ARUK-UCL"/>
</dbReference>
<dbReference type="GO" id="GO:0002639">
    <property type="term" value="P:positive regulation of immunoglobulin production"/>
    <property type="evidence" value="ECO:0000314"/>
    <property type="project" value="BHF-UCL"/>
</dbReference>
<dbReference type="GO" id="GO:0032731">
    <property type="term" value="P:positive regulation of interleukin-1 beta production"/>
    <property type="evidence" value="ECO:0000316"/>
    <property type="project" value="ARUK-UCL"/>
</dbReference>
<dbReference type="GO" id="GO:0032733">
    <property type="term" value="P:positive regulation of interleukin-10 production"/>
    <property type="evidence" value="ECO:0000314"/>
    <property type="project" value="ARUK-UCL"/>
</dbReference>
<dbReference type="GO" id="GO:0032740">
    <property type="term" value="P:positive regulation of interleukin-17 production"/>
    <property type="evidence" value="ECO:0000250"/>
    <property type="project" value="ARUK-UCL"/>
</dbReference>
<dbReference type="GO" id="GO:0032745">
    <property type="term" value="P:positive regulation of interleukin-21 production"/>
    <property type="evidence" value="ECO:0000250"/>
    <property type="project" value="UniProtKB"/>
</dbReference>
<dbReference type="GO" id="GO:0032755">
    <property type="term" value="P:positive regulation of interleukin-6 production"/>
    <property type="evidence" value="ECO:0000314"/>
    <property type="project" value="BHF-UCL"/>
</dbReference>
<dbReference type="GO" id="GO:0032757">
    <property type="term" value="P:positive regulation of interleukin-8 production"/>
    <property type="evidence" value="ECO:0000314"/>
    <property type="project" value="ARUK-UCL"/>
</dbReference>
<dbReference type="GO" id="GO:1904996">
    <property type="term" value="P:positive regulation of leukocyte adhesion to vascular endothelial cell"/>
    <property type="evidence" value="ECO:0000314"/>
    <property type="project" value="ARUK-UCL"/>
</dbReference>
<dbReference type="GO" id="GO:0002690">
    <property type="term" value="P:positive regulation of leukocyte chemotaxis"/>
    <property type="evidence" value="ECO:0000304"/>
    <property type="project" value="BHF-UCL"/>
</dbReference>
<dbReference type="GO" id="GO:0043410">
    <property type="term" value="P:positive regulation of MAPK cascade"/>
    <property type="evidence" value="ECO:0000314"/>
    <property type="project" value="BHF-UCL"/>
</dbReference>
<dbReference type="GO" id="GO:1902895">
    <property type="term" value="P:positive regulation of miRNA transcription"/>
    <property type="evidence" value="ECO:0000314"/>
    <property type="project" value="BHF-UCL"/>
</dbReference>
<dbReference type="GO" id="GO:0150078">
    <property type="term" value="P:positive regulation of neuroinflammatory response"/>
    <property type="evidence" value="ECO:0000304"/>
    <property type="project" value="ARUK-UCL"/>
</dbReference>
<dbReference type="GO" id="GO:0045669">
    <property type="term" value="P:positive regulation of osteoblast differentiation"/>
    <property type="evidence" value="ECO:0000304"/>
    <property type="project" value="BHF-UCL"/>
</dbReference>
<dbReference type="GO" id="GO:0033138">
    <property type="term" value="P:positive regulation of peptidyl-serine phosphorylation"/>
    <property type="evidence" value="ECO:0000314"/>
    <property type="project" value="MGI"/>
</dbReference>
<dbReference type="GO" id="GO:0050731">
    <property type="term" value="P:positive regulation of peptidyl-tyrosine phosphorylation"/>
    <property type="evidence" value="ECO:0000314"/>
    <property type="project" value="MGI"/>
</dbReference>
<dbReference type="GO" id="GO:1901731">
    <property type="term" value="P:positive regulation of platelet aggregation"/>
    <property type="evidence" value="ECO:0000314"/>
    <property type="project" value="ARUK-UCL"/>
</dbReference>
<dbReference type="GO" id="GO:0046427">
    <property type="term" value="P:positive regulation of receptor signaling pathway via JAK-STAT"/>
    <property type="evidence" value="ECO:0000314"/>
    <property type="project" value="BHF-UCL"/>
</dbReference>
<dbReference type="GO" id="GO:1904894">
    <property type="term" value="P:positive regulation of receptor signaling pathway via STAT"/>
    <property type="evidence" value="ECO:0000316"/>
    <property type="project" value="ARUK-UCL"/>
</dbReference>
<dbReference type="GO" id="GO:0048661">
    <property type="term" value="P:positive regulation of smooth muscle cell proliferation"/>
    <property type="evidence" value="ECO:0000314"/>
    <property type="project" value="BHF-UCL"/>
</dbReference>
<dbReference type="GO" id="GO:0042102">
    <property type="term" value="P:positive regulation of T cell proliferation"/>
    <property type="evidence" value="ECO:0000314"/>
    <property type="project" value="BHF-UCL"/>
</dbReference>
<dbReference type="GO" id="GO:2000553">
    <property type="term" value="P:positive regulation of T-helper 2 cell cytokine production"/>
    <property type="evidence" value="ECO:0000250"/>
    <property type="project" value="BHF-UCL"/>
</dbReference>
<dbReference type="GO" id="GO:0045944">
    <property type="term" value="P:positive regulation of transcription by RNA polymerase II"/>
    <property type="evidence" value="ECO:0000314"/>
    <property type="project" value="BHF-UCL"/>
</dbReference>
<dbReference type="GO" id="GO:0045727">
    <property type="term" value="P:positive regulation of translation"/>
    <property type="evidence" value="ECO:0000314"/>
    <property type="project" value="UniProtKB"/>
</dbReference>
<dbReference type="GO" id="GO:0032760">
    <property type="term" value="P:positive regulation of tumor necrosis factor production"/>
    <property type="evidence" value="ECO:0000314"/>
    <property type="project" value="ARUK-UCL"/>
</dbReference>
<dbReference type="GO" id="GO:2000676">
    <property type="term" value="P:positive regulation of type B pancreatic cell apoptotic process"/>
    <property type="evidence" value="ECO:0000304"/>
    <property type="project" value="BHF-UCL"/>
</dbReference>
<dbReference type="GO" id="GO:0010575">
    <property type="term" value="P:positive regulation of vascular endothelial growth factor production"/>
    <property type="evidence" value="ECO:0000315"/>
    <property type="project" value="ARUK-UCL"/>
</dbReference>
<dbReference type="GO" id="GO:0045765">
    <property type="term" value="P:regulation of angiogenesis"/>
    <property type="evidence" value="ECO:0000305"/>
    <property type="project" value="BHF-UCL"/>
</dbReference>
<dbReference type="GO" id="GO:0061888">
    <property type="term" value="P:regulation of astrocyte activation"/>
    <property type="evidence" value="ECO:0000304"/>
    <property type="project" value="ARUK-UCL"/>
</dbReference>
<dbReference type="GO" id="GO:0070092">
    <property type="term" value="P:regulation of glucagon secretion"/>
    <property type="evidence" value="ECO:0000314"/>
    <property type="project" value="UniProtKB"/>
</dbReference>
<dbReference type="GO" id="GO:0050796">
    <property type="term" value="P:regulation of insulin secretion"/>
    <property type="evidence" value="ECO:0000314"/>
    <property type="project" value="UniProtKB"/>
</dbReference>
<dbReference type="GO" id="GO:1903978">
    <property type="term" value="P:regulation of microglial cell activation"/>
    <property type="evidence" value="ECO:0000304"/>
    <property type="project" value="ARUK-UCL"/>
</dbReference>
<dbReference type="GO" id="GO:0150077">
    <property type="term" value="P:regulation of neuroinflammatory response"/>
    <property type="evidence" value="ECO:0000304"/>
    <property type="project" value="ARUK-UCL"/>
</dbReference>
<dbReference type="GO" id="GO:0010574">
    <property type="term" value="P:regulation of vascular endothelial growth factor production"/>
    <property type="evidence" value="ECO:0000314"/>
    <property type="project" value="BHF-UCL"/>
</dbReference>
<dbReference type="GO" id="GO:0014823">
    <property type="term" value="P:response to activity"/>
    <property type="evidence" value="ECO:0000250"/>
    <property type="project" value="UniProtKB"/>
</dbReference>
<dbReference type="GO" id="GO:0051384">
    <property type="term" value="P:response to glucocorticoid"/>
    <property type="evidence" value="ECO:0000314"/>
    <property type="project" value="BHF-UCL"/>
</dbReference>
<dbReference type="GO" id="GO:0032494">
    <property type="term" value="P:response to peptidoglycan"/>
    <property type="evidence" value="ECO:0000303"/>
    <property type="project" value="BHF-UCL"/>
</dbReference>
<dbReference type="GO" id="GO:0061470">
    <property type="term" value="P:T follicular helper cell differentiation"/>
    <property type="evidence" value="ECO:0000250"/>
    <property type="project" value="UniProtKB"/>
</dbReference>
<dbReference type="GO" id="GO:0072540">
    <property type="term" value="P:T-helper 17 cell lineage commitment"/>
    <property type="evidence" value="ECO:0000250"/>
    <property type="project" value="UniProtKB"/>
</dbReference>
<dbReference type="GO" id="GO:0010573">
    <property type="term" value="P:vascular endothelial growth factor production"/>
    <property type="evidence" value="ECO:0000314"/>
    <property type="project" value="UniProtKB"/>
</dbReference>
<dbReference type="DisProt" id="DP02745"/>
<dbReference type="FunFam" id="1.20.1250.10:FF:000006">
    <property type="entry name" value="Interleukin-6"/>
    <property type="match status" value="1"/>
</dbReference>
<dbReference type="Gene3D" id="1.20.1250.10">
    <property type="match status" value="1"/>
</dbReference>
<dbReference type="InterPro" id="IPR009079">
    <property type="entry name" value="4_helix_cytokine-like_core"/>
</dbReference>
<dbReference type="InterPro" id="IPR003574">
    <property type="entry name" value="IL-6-like"/>
</dbReference>
<dbReference type="InterPro" id="IPR030474">
    <property type="entry name" value="IL-6/GCSF/MGF"/>
</dbReference>
<dbReference type="InterPro" id="IPR030473">
    <property type="entry name" value="IL6/GCSF/MGF_CS"/>
</dbReference>
<dbReference type="PANTHER" id="PTHR48494">
    <property type="entry name" value="INTERLEUKIN-6"/>
    <property type="match status" value="1"/>
</dbReference>
<dbReference type="PANTHER" id="PTHR48494:SF1">
    <property type="entry name" value="INTERLEUKIN-6"/>
    <property type="match status" value="1"/>
</dbReference>
<dbReference type="Pfam" id="PF00489">
    <property type="entry name" value="IL6"/>
    <property type="match status" value="1"/>
</dbReference>
<dbReference type="PIRSF" id="PIRSF001935">
    <property type="entry name" value="IL6_MGF_GCSF"/>
    <property type="match status" value="1"/>
</dbReference>
<dbReference type="PRINTS" id="PR00433">
    <property type="entry name" value="IL6GCSFMGF"/>
</dbReference>
<dbReference type="PRINTS" id="PR00434">
    <property type="entry name" value="INTERLEUKIN6"/>
</dbReference>
<dbReference type="SMART" id="SM00126">
    <property type="entry name" value="IL6"/>
    <property type="match status" value="1"/>
</dbReference>
<dbReference type="SUPFAM" id="SSF47266">
    <property type="entry name" value="4-helical cytokines"/>
    <property type="match status" value="1"/>
</dbReference>
<dbReference type="PROSITE" id="PS00254">
    <property type="entry name" value="INTERLEUKIN_6"/>
    <property type="match status" value="1"/>
</dbReference>
<proteinExistence type="evidence at protein level"/>
<comment type="function">
    <text evidence="22">Cytokine with a wide variety of biological functions in immunity, tissue regeneration, and metabolism. Binds to IL6R, then the complex associates to the signaling subunit IL6ST/gp130 to trigger the intracellular IL6-signaling pathway (Probable). The interaction with the membrane-bound IL6R and IL6ST stimulates 'classic signaling', whereas the binding of IL6 and soluble IL6R to IL6ST stimulates 'trans-signaling'. Alternatively, 'cluster signaling' occurs when membrane-bound IL6:IL6R complexes on transmitter cells activate IL6ST receptors on neighboring receiver cells (Probable).</text>
</comment>
<comment type="function">
    <text evidence="1 22">IL6 is a potent inducer of the acute phase response. Rapid production of IL6 contributes to host defense during infection and tissue injury, but excessive IL6 synthesis is involved in disease pathology. In the innate immune response, is synthesized by myeloid cells, such as macrophages and dendritic cells, upon recognition of pathogens through toll-like receptors (TLRs) at the site of infection or tissue injury (Probable). In the adaptive immune response, is required for the differentiation of B cells into immunoglobulin-secreting cells. Plays a major role in the differentiation of CD4(+) T cell subsets. Essential factor for the development of T follicular helper (Tfh) cells that are required for the induction of germinal-center formation. Required to drive naive CD4(+) T cells to the Th17 lineage. Also required for proliferation of myeloma cells and the survival of plasmablast cells (By similarity).</text>
</comment>
<comment type="function">
    <text evidence="1 6 8 9 12 22">Acts as an essential factor in bone homeostasis and on vessels directly or indirectly by induction of VEGF, resulting in increased angiogenesis activity and vascular permeability (PubMed:12794819, PubMed:17075861). Induces, through 'trans-signaling' and synergistically with IL1B and TNF, the production of VEGF (PubMed:12794819). Involved in metabolic controls, is discharged into the bloodstream after muscle contraction increasing lipolysis and improving insulin resistance (PubMed:20823453). 'Trans-signaling' in central nervous system also regulates energy and glucose homeostasis (By similarity). Mediates, through GLP-1, crosstalk between insulin-sensitive tissues, intestinal L cells and pancreatic islets to adapt to changes in insulin demand (By similarity). Also acts as a myokine (Probable). Plays a protective role during liver injury, being required for maintenance of tissue regeneration (By similarity). Also has a pivotal role in iron metabolism by regulating HAMP/hepcidin expression upon inflammation or bacterial infection (PubMed:15124018). Through activation of IL6ST-YAP-NOTCH pathway, induces inflammation-induced epithelial regeneration (By similarity).</text>
</comment>
<comment type="subunit">
    <text evidence="7 16">Component of a hexamer of two molecules each of IL6, IL6R and IL6ST; first binds to IL6R to associate with the signaling subunit IL6ST (PubMed:12829785). Interacts with IL6R (via the N-terminal ectodomain); this interaction may be affected by IL6R-binding with SORL1, hence decreasing IL6 cis signaling (PubMed:28265003). Interacts with SORL1 (via the N-terminal ectodomain); this interaction leads to IL6 internalization and lysosomal degradation (PubMed:28265003). May form a trimeric complex with the soluble SORL1 ectodomain and soluble IL6R receptor; this interaction might stabilize circulating IL6, hence promoting IL6 trans signaling (PubMed:28265003).</text>
</comment>
<comment type="interaction">
    <interactant intactId="EBI-720533">
        <id>P05231</id>
    </interactant>
    <interactant intactId="EBI-720533">
        <id>P05231</id>
        <label>IL6</label>
    </interactant>
    <organismsDiffer>false</organismsDiffer>
    <experiments>2</experiments>
</comment>
<comment type="interaction">
    <interactant intactId="EBI-720533">
        <id>P05231</id>
    </interactant>
    <interactant intactId="EBI-299383">
        <id>P08887</id>
        <label>IL6R</label>
    </interactant>
    <organismsDiffer>false</organismsDiffer>
    <experiments>7</experiments>
</comment>
<comment type="interaction">
    <interactant intactId="EBI-720533">
        <id>P05231</id>
    </interactant>
    <interactant intactId="EBI-52312520">
        <id>PRO_0000450730</id>
        <label>IL6R</label>
        <dbReference type="UniProtKB" id="P08887"/>
    </interactant>
    <organismsDiffer>false</organismsDiffer>
    <experiments>3</experiments>
</comment>
<comment type="interaction">
    <interactant intactId="EBI-720533">
        <id>P05231</id>
    </interactant>
    <interactant intactId="EBI-1171329">
        <id>Q92673</id>
        <label>SORL1</label>
    </interactant>
    <organismsDiffer>false</organismsDiffer>
    <experiments>4</experiments>
</comment>
<comment type="interaction">
    <interactant intactId="EBI-720533">
        <id>P05231</id>
    </interactant>
    <interactant intactId="EBI-1057058">
        <id>Q99523</id>
        <label>SORT1</label>
    </interactant>
    <organismsDiffer>false</organismsDiffer>
    <experiments>4</experiments>
</comment>
<comment type="subcellular location">
    <subcellularLocation>
        <location evidence="3">Secreted</location>
    </subcellularLocation>
</comment>
<comment type="tissue specificity">
    <text evidence="3">Produced by skeletal muscle.</text>
</comment>
<comment type="induction">
    <text evidence="3 18">Plasma levels are highly increased upon exercise, due to enhanced production by contracting skeletal muscles. Up-regulated by coagulation factor Xa (F10) in PAR-1 (F2R)-dependent manner in cardiac fibroblasts (PubMed:34831181).</text>
</comment>
<comment type="PTM">
    <text evidence="10">N- and O-glycosylated.</text>
</comment>
<comment type="polymorphism">
    <text evidence="4 5">Genetic variations in IL6 may be correlated with bone mineral density (BMD). Low BMD is a risk factor for osteoporotic fracture. Osteoporosis is characterized by reduced bone mineral density, disruption of bone microarchitecture, and the alteration of the amount and variety of non-collagenous proteins in bone. Osteoporotic bones are more at risk of fracture.</text>
</comment>
<comment type="disease" evidence="19">
    <disease id="DI-02819">
        <name>Rheumatoid arthritis systemic juvenile</name>
        <acronym>RASJ</acronym>
        <description>An inflammatory articular disorder with systemic onset beginning before the age of 16. It represents a subgroup of juvenile arthritis associated with severe extraarticular features and occasionally fatal complications. During active phases of the disorder, patients display a typical daily spiking fever, an evanescent macular rash, lymphadenopathy, hepatosplenomegaly, serositis, myalgia and arthritis.</description>
        <dbReference type="MIM" id="604302"/>
    </disease>
    <text>Disease susceptibility is associated with variants affecting the gene represented in this entry.</text>
</comment>
<comment type="disease">
    <text evidence="2">A IL6 promoter polymorphism is associated with a lifetime risk of development of Kaposi sarcoma in HIV-infected men.</text>
</comment>
<comment type="similarity">
    <text evidence="21">Belongs to the IL-6 superfamily.</text>
</comment>
<comment type="online information" name="Wikipedia">
    <link uri="https://en.wikipedia.org/wiki/Interleukin_6"/>
    <text>Interleukin-6 entry</text>
</comment>
<comment type="online information" name="Atlas of Genetics and Cytogenetics in Oncology and Haematology">
    <link uri="https://atlasgeneticsoncology.org/gene/519/IL6"/>
</comment>
<name>IL6_HUMAN</name>